<dbReference type="EMBL" id="AJ002395">
    <property type="protein sequence ID" value="CAA05373.1"/>
    <property type="status" value="ALT_INIT"/>
    <property type="molecule type" value="Genomic_DNA"/>
</dbReference>
<dbReference type="EMBL" id="AE003852">
    <property type="protein sequence ID" value="AAF93845.1"/>
    <property type="molecule type" value="Genomic_DNA"/>
</dbReference>
<dbReference type="PIR" id="B82293">
    <property type="entry name" value="B82293"/>
</dbReference>
<dbReference type="RefSeq" id="NP_230329.1">
    <property type="nucleotide sequence ID" value="NC_002505.1"/>
</dbReference>
<dbReference type="SMR" id="O34238"/>
<dbReference type="STRING" id="243277.VC_0680"/>
<dbReference type="DNASU" id="2615469"/>
<dbReference type="EnsemblBacteria" id="AAF93845">
    <property type="protein sequence ID" value="AAF93845"/>
    <property type="gene ID" value="VC_0680"/>
</dbReference>
<dbReference type="KEGG" id="vch:VC_0680"/>
<dbReference type="PATRIC" id="fig|243277.26.peg.652"/>
<dbReference type="eggNOG" id="COG0728">
    <property type="taxonomic scope" value="Bacteria"/>
</dbReference>
<dbReference type="HOGENOM" id="CLU_006797_5_3_6"/>
<dbReference type="UniPathway" id="UPA00219"/>
<dbReference type="Proteomes" id="UP000000584">
    <property type="component" value="Chromosome 1"/>
</dbReference>
<dbReference type="GO" id="GO:0005886">
    <property type="term" value="C:plasma membrane"/>
    <property type="evidence" value="ECO:0000318"/>
    <property type="project" value="GO_Central"/>
</dbReference>
<dbReference type="GO" id="GO:0015648">
    <property type="term" value="F:lipid-linked peptidoglycan transporter activity"/>
    <property type="evidence" value="ECO:0000318"/>
    <property type="project" value="GO_Central"/>
</dbReference>
<dbReference type="GO" id="GO:0071555">
    <property type="term" value="P:cell wall organization"/>
    <property type="evidence" value="ECO:0007669"/>
    <property type="project" value="UniProtKB-KW"/>
</dbReference>
<dbReference type="GO" id="GO:0034204">
    <property type="term" value="P:lipid translocation"/>
    <property type="evidence" value="ECO:0000318"/>
    <property type="project" value="GO_Central"/>
</dbReference>
<dbReference type="GO" id="GO:0015836">
    <property type="term" value="P:lipid-linked peptidoglycan transport"/>
    <property type="evidence" value="ECO:0000318"/>
    <property type="project" value="GO_Central"/>
</dbReference>
<dbReference type="GO" id="GO:0009252">
    <property type="term" value="P:peptidoglycan biosynthetic process"/>
    <property type="evidence" value="ECO:0000318"/>
    <property type="project" value="GO_Central"/>
</dbReference>
<dbReference type="GO" id="GO:0008360">
    <property type="term" value="P:regulation of cell shape"/>
    <property type="evidence" value="ECO:0007669"/>
    <property type="project" value="UniProtKB-KW"/>
</dbReference>
<dbReference type="CDD" id="cd13123">
    <property type="entry name" value="MATE_MurJ_like"/>
    <property type="match status" value="1"/>
</dbReference>
<dbReference type="HAMAP" id="MF_02078">
    <property type="entry name" value="MurJ_MviN"/>
    <property type="match status" value="1"/>
</dbReference>
<dbReference type="InterPro" id="IPR051050">
    <property type="entry name" value="Lipid_II_flippase_MurJ/MviN"/>
</dbReference>
<dbReference type="InterPro" id="IPR004268">
    <property type="entry name" value="MurJ"/>
</dbReference>
<dbReference type="NCBIfam" id="TIGR01695">
    <property type="entry name" value="murJ_mviN"/>
    <property type="match status" value="1"/>
</dbReference>
<dbReference type="PANTHER" id="PTHR47019">
    <property type="entry name" value="LIPID II FLIPPASE MURJ"/>
    <property type="match status" value="1"/>
</dbReference>
<dbReference type="PANTHER" id="PTHR47019:SF1">
    <property type="entry name" value="LIPID II FLIPPASE MURJ"/>
    <property type="match status" value="1"/>
</dbReference>
<dbReference type="Pfam" id="PF03023">
    <property type="entry name" value="MurJ"/>
    <property type="match status" value="1"/>
</dbReference>
<dbReference type="PIRSF" id="PIRSF002869">
    <property type="entry name" value="MviN"/>
    <property type="match status" value="1"/>
</dbReference>
<dbReference type="PRINTS" id="PR01806">
    <property type="entry name" value="VIRFACTRMVIN"/>
</dbReference>
<comment type="function">
    <text evidence="1">Involved in peptidoglycan biosynthesis. Transports lipid-linked peptidoglycan precursors from the inner to the outer leaflet of the cytoplasmic membrane.</text>
</comment>
<comment type="pathway">
    <text evidence="1">Cell wall biogenesis; peptidoglycan biosynthesis.</text>
</comment>
<comment type="subcellular location">
    <subcellularLocation>
        <location evidence="1">Cell inner membrane</location>
        <topology evidence="1">Multi-pass membrane protein</topology>
    </subcellularLocation>
</comment>
<comment type="similarity">
    <text evidence="1">Belongs to the MurJ/MviN family.</text>
</comment>
<comment type="sequence caution" evidence="2">
    <conflict type="erroneous initiation">
        <sequence resource="EMBL-CDS" id="CAA05373"/>
    </conflict>
    <text>Truncated N-terminus.</text>
</comment>
<name>MURJ_VIBCH</name>
<sequence>MFEVTVSKRLLKSGIIVSAMTLISRVLGLVRDVVVANLMGAGASADVFFFANRIPNFLRRLFAEGAFSQAFVPVLTEYHASGDINKTRDLIARASGTLGVLVTIVTLIGVLGSGAVTALFGAGWFLDWLNGGPAAGKFELASLLLKITFPYLWFITFVALSGAILNTLGKFAVSSFTPVFLNVMMILCAWYLSPNLEQPEVGLAIGVFLGGLVQFLFQLPFLIKAGVLVRPKWGWKDPGVVKIRTLMIPALFGVSVSQINLLFDSFVASFLQTGSISWLYYSDRLLEFPLGLFGIAIATVILPALSRKHVDAHSDGFAHTMDWGIRMVTFLGIPAMLGLMVLAKPMLMVLFMRGEFTPSDVEQASYSLLAYSSGLLSFMLIKVLAPGYYSRQDTKTPVRYGIIAMVSNIVLNAIFAWFYGYVGLAVATSMSAFLNMALLYRGLHLQGVYHLTRKTVWFVARLAMAGAVMTGALLWQLDTMATWLSWGISQRALTLTGLIGLGVASYLAILLLLGVRLKDLKAATE</sequence>
<proteinExistence type="inferred from homology"/>
<gene>
    <name evidence="1" type="primary">murJ</name>
    <name type="synonym">mviN</name>
    <name type="ordered locus">VC_0680</name>
</gene>
<keyword id="KW-0997">Cell inner membrane</keyword>
<keyword id="KW-1003">Cell membrane</keyword>
<keyword id="KW-0133">Cell shape</keyword>
<keyword id="KW-0961">Cell wall biogenesis/degradation</keyword>
<keyword id="KW-0472">Membrane</keyword>
<keyword id="KW-0573">Peptidoglycan synthesis</keyword>
<keyword id="KW-1185">Reference proteome</keyword>
<keyword id="KW-0812">Transmembrane</keyword>
<keyword id="KW-1133">Transmembrane helix</keyword>
<keyword id="KW-0813">Transport</keyword>
<feature type="chain" id="PRO_0000182018" description="Probable lipid II flippase MurJ">
    <location>
        <begin position="1"/>
        <end position="525"/>
    </location>
</feature>
<feature type="transmembrane region" description="Helical" evidence="1">
    <location>
        <begin position="10"/>
        <end position="30"/>
    </location>
</feature>
<feature type="transmembrane region" description="Helical" evidence="1">
    <location>
        <begin position="32"/>
        <end position="52"/>
    </location>
</feature>
<feature type="transmembrane region" description="Helical" evidence="1">
    <location>
        <begin position="100"/>
        <end position="120"/>
    </location>
</feature>
<feature type="transmembrane region" description="Helical" evidence="1">
    <location>
        <begin position="140"/>
        <end position="160"/>
    </location>
</feature>
<feature type="transmembrane region" description="Helical" evidence="1">
    <location>
        <begin position="171"/>
        <end position="191"/>
    </location>
</feature>
<feature type="transmembrane region" description="Helical" evidence="1">
    <location>
        <begin position="203"/>
        <end position="223"/>
    </location>
</feature>
<feature type="transmembrane region" description="Helical" evidence="1">
    <location>
        <begin position="247"/>
        <end position="267"/>
    </location>
</feature>
<feature type="transmembrane region" description="Helical" evidence="1">
    <location>
        <begin position="285"/>
        <end position="305"/>
    </location>
</feature>
<feature type="transmembrane region" description="Helical" evidence="1">
    <location>
        <begin position="330"/>
        <end position="350"/>
    </location>
</feature>
<feature type="transmembrane region" description="Helical" evidence="1">
    <location>
        <begin position="368"/>
        <end position="388"/>
    </location>
</feature>
<feature type="transmembrane region" description="Helical" evidence="1">
    <location>
        <begin position="402"/>
        <end position="422"/>
    </location>
</feature>
<feature type="transmembrane region" description="Helical" evidence="1">
    <location>
        <begin position="423"/>
        <end position="443"/>
    </location>
</feature>
<feature type="transmembrane region" description="Helical" evidence="1">
    <location>
        <begin position="455"/>
        <end position="475"/>
    </location>
</feature>
<feature type="transmembrane region" description="Helical" evidence="1">
    <location>
        <begin position="495"/>
        <end position="515"/>
    </location>
</feature>
<reference key="1">
    <citation type="journal article" date="1998" name="J. Bacteriol.">
        <title>A functional homolog of Escherichia coli NhaR in Vibrio cholerae.</title>
        <authorList>
            <person name="Williams S.G."/>
            <person name="Carmel-Harel O."/>
            <person name="Manning P.A."/>
        </authorList>
    </citation>
    <scope>NUCLEOTIDE SEQUENCE [GENOMIC DNA]</scope>
    <source>
        <strain>El Tor O17 / Serotype O1</strain>
    </source>
</reference>
<reference key="2">
    <citation type="journal article" date="2000" name="Nature">
        <title>DNA sequence of both chromosomes of the cholera pathogen Vibrio cholerae.</title>
        <authorList>
            <person name="Heidelberg J.F."/>
            <person name="Eisen J.A."/>
            <person name="Nelson W.C."/>
            <person name="Clayton R.A."/>
            <person name="Gwinn M.L."/>
            <person name="Dodson R.J."/>
            <person name="Haft D.H."/>
            <person name="Hickey E.K."/>
            <person name="Peterson J.D."/>
            <person name="Umayam L.A."/>
            <person name="Gill S.R."/>
            <person name="Nelson K.E."/>
            <person name="Read T.D."/>
            <person name="Tettelin H."/>
            <person name="Richardson D.L."/>
            <person name="Ermolaeva M.D."/>
            <person name="Vamathevan J.J."/>
            <person name="Bass S."/>
            <person name="Qin H."/>
            <person name="Dragoi I."/>
            <person name="Sellers P."/>
            <person name="McDonald L.A."/>
            <person name="Utterback T.R."/>
            <person name="Fleischmann R.D."/>
            <person name="Nierman W.C."/>
            <person name="White O."/>
            <person name="Salzberg S.L."/>
            <person name="Smith H.O."/>
            <person name="Colwell R.R."/>
            <person name="Mekalanos J.J."/>
            <person name="Venter J.C."/>
            <person name="Fraser C.M."/>
        </authorList>
    </citation>
    <scope>NUCLEOTIDE SEQUENCE [LARGE SCALE GENOMIC DNA]</scope>
    <source>
        <strain>ATCC 39315 / El Tor Inaba N16961</strain>
    </source>
</reference>
<evidence type="ECO:0000255" key="1">
    <source>
        <dbReference type="HAMAP-Rule" id="MF_02078"/>
    </source>
</evidence>
<evidence type="ECO:0000305" key="2"/>
<organism>
    <name type="scientific">Vibrio cholerae serotype O1 (strain ATCC 39315 / El Tor Inaba N16961)</name>
    <dbReference type="NCBI Taxonomy" id="243277"/>
    <lineage>
        <taxon>Bacteria</taxon>
        <taxon>Pseudomonadati</taxon>
        <taxon>Pseudomonadota</taxon>
        <taxon>Gammaproteobacteria</taxon>
        <taxon>Vibrionales</taxon>
        <taxon>Vibrionaceae</taxon>
        <taxon>Vibrio</taxon>
    </lineage>
</organism>
<accession>O34238</accession>
<accession>Q9KU49</accession>
<protein>
    <recommendedName>
        <fullName evidence="1">Probable lipid II flippase MurJ</fullName>
    </recommendedName>
</protein>